<sequence>MNKTRYRLDVAYDGANFCGWAPQPGLRTVGGLILDALRLICSEPPDIVIAARTDAGVHALQQVCHVDLISSPDPVWLLHRLRSLLKSETDLHILSAVKAPVNFHARFSAIGRRYVYRVIDKRSSWYPQNRYFVYRVNAFLQDYRMRRAASGLIGLKDFGAFCKPRRMGSTVRHLRQFEVIRQPDGQIHFFLESDAFCHSMVRNLVGSLIEVGRGALTLQDLFCYTKIAKRTPKIPTLPPHALTLIGIDYPQEHLFECQNRKTRQKRT</sequence>
<proteinExistence type="inferred from homology"/>
<accession>Q820Z2</accession>
<comment type="function">
    <text evidence="1">Formation of pseudouridine at positions 38, 39 and 40 in the anticodon stem and loop of transfer RNAs.</text>
</comment>
<comment type="catalytic activity">
    <reaction evidence="1">
        <text>uridine(38/39/40) in tRNA = pseudouridine(38/39/40) in tRNA</text>
        <dbReference type="Rhea" id="RHEA:22376"/>
        <dbReference type="Rhea" id="RHEA-COMP:10085"/>
        <dbReference type="Rhea" id="RHEA-COMP:10087"/>
        <dbReference type="ChEBI" id="CHEBI:65314"/>
        <dbReference type="ChEBI" id="CHEBI:65315"/>
        <dbReference type="EC" id="5.4.99.12"/>
    </reaction>
</comment>
<comment type="subunit">
    <text evidence="1">Homodimer.</text>
</comment>
<comment type="similarity">
    <text evidence="1">Belongs to the tRNA pseudouridine synthase TruA family.</text>
</comment>
<evidence type="ECO:0000255" key="1">
    <source>
        <dbReference type="HAMAP-Rule" id="MF_00171"/>
    </source>
</evidence>
<reference key="1">
    <citation type="journal article" date="2003" name="Lancet">
        <title>Sequencing and analysis of the genome of the Whipple's disease bacterium Tropheryma whipplei.</title>
        <authorList>
            <person name="Bentley S.D."/>
            <person name="Maiwald M."/>
            <person name="Murphy L.D."/>
            <person name="Pallen M.J."/>
            <person name="Yeats C.A."/>
            <person name="Dover L.G."/>
            <person name="Norbertczak H.T."/>
            <person name="Besra G.S."/>
            <person name="Quail M.A."/>
            <person name="Harris D.E."/>
            <person name="von Herbay A."/>
            <person name="Goble A."/>
            <person name="Rutter S."/>
            <person name="Squares R."/>
            <person name="Squares S."/>
            <person name="Barrell B.G."/>
            <person name="Parkhill J."/>
            <person name="Relman D.A."/>
        </authorList>
    </citation>
    <scope>NUCLEOTIDE SEQUENCE [LARGE SCALE GENOMIC DNA]</scope>
    <source>
        <strain>TW08/27</strain>
    </source>
</reference>
<organism>
    <name type="scientific">Tropheryma whipplei (strain TW08/27)</name>
    <name type="common">Whipple's bacillus</name>
    <dbReference type="NCBI Taxonomy" id="218496"/>
    <lineage>
        <taxon>Bacteria</taxon>
        <taxon>Bacillati</taxon>
        <taxon>Actinomycetota</taxon>
        <taxon>Actinomycetes</taxon>
        <taxon>Micrococcales</taxon>
        <taxon>Tropherymataceae</taxon>
        <taxon>Tropheryma</taxon>
    </lineage>
</organism>
<name>TRUA_TROW8</name>
<dbReference type="EC" id="5.4.99.12" evidence="1"/>
<dbReference type="EMBL" id="BX251410">
    <property type="protein sequence ID" value="CAD66911.1"/>
    <property type="molecule type" value="Genomic_DNA"/>
</dbReference>
<dbReference type="RefSeq" id="WP_011096192.1">
    <property type="nucleotide sequence ID" value="NC_004551.1"/>
</dbReference>
<dbReference type="SMR" id="Q820Z2"/>
<dbReference type="GeneID" id="67388010"/>
<dbReference type="KEGG" id="tws:TW234"/>
<dbReference type="HOGENOM" id="CLU_014673_0_2_11"/>
<dbReference type="GO" id="GO:0003723">
    <property type="term" value="F:RNA binding"/>
    <property type="evidence" value="ECO:0007669"/>
    <property type="project" value="InterPro"/>
</dbReference>
<dbReference type="GO" id="GO:0160147">
    <property type="term" value="F:tRNA pseudouridine(38-40) synthase activity"/>
    <property type="evidence" value="ECO:0007669"/>
    <property type="project" value="UniProtKB-EC"/>
</dbReference>
<dbReference type="GO" id="GO:0031119">
    <property type="term" value="P:tRNA pseudouridine synthesis"/>
    <property type="evidence" value="ECO:0007669"/>
    <property type="project" value="UniProtKB-UniRule"/>
</dbReference>
<dbReference type="CDD" id="cd02570">
    <property type="entry name" value="PseudoU_synth_EcTruA"/>
    <property type="match status" value="1"/>
</dbReference>
<dbReference type="Gene3D" id="3.30.70.660">
    <property type="entry name" value="Pseudouridine synthase I, catalytic domain, C-terminal subdomain"/>
    <property type="match status" value="1"/>
</dbReference>
<dbReference type="Gene3D" id="3.30.70.580">
    <property type="entry name" value="Pseudouridine synthase I, catalytic domain, N-terminal subdomain"/>
    <property type="match status" value="1"/>
</dbReference>
<dbReference type="HAMAP" id="MF_00171">
    <property type="entry name" value="TruA"/>
    <property type="match status" value="1"/>
</dbReference>
<dbReference type="InterPro" id="IPR020103">
    <property type="entry name" value="PsdUridine_synth_cat_dom_sf"/>
</dbReference>
<dbReference type="InterPro" id="IPR001406">
    <property type="entry name" value="PsdUridine_synth_TruA"/>
</dbReference>
<dbReference type="InterPro" id="IPR020097">
    <property type="entry name" value="PsdUridine_synth_TruA_a/b_dom"/>
</dbReference>
<dbReference type="InterPro" id="IPR020095">
    <property type="entry name" value="PsdUridine_synth_TruA_C"/>
</dbReference>
<dbReference type="InterPro" id="IPR020094">
    <property type="entry name" value="TruA/RsuA/RluB/E/F_N"/>
</dbReference>
<dbReference type="PANTHER" id="PTHR11142">
    <property type="entry name" value="PSEUDOURIDYLATE SYNTHASE"/>
    <property type="match status" value="1"/>
</dbReference>
<dbReference type="PANTHER" id="PTHR11142:SF0">
    <property type="entry name" value="TRNA PSEUDOURIDINE SYNTHASE-LIKE 1"/>
    <property type="match status" value="1"/>
</dbReference>
<dbReference type="Pfam" id="PF01416">
    <property type="entry name" value="PseudoU_synth_1"/>
    <property type="match status" value="1"/>
</dbReference>
<dbReference type="PIRSF" id="PIRSF001430">
    <property type="entry name" value="tRNA_psdUrid_synth"/>
    <property type="match status" value="1"/>
</dbReference>
<dbReference type="SUPFAM" id="SSF55120">
    <property type="entry name" value="Pseudouridine synthase"/>
    <property type="match status" value="1"/>
</dbReference>
<keyword id="KW-0413">Isomerase</keyword>
<keyword id="KW-0819">tRNA processing</keyword>
<gene>
    <name evidence="1" type="primary">truA</name>
    <name type="ordered locus">TW234</name>
</gene>
<protein>
    <recommendedName>
        <fullName evidence="1">tRNA pseudouridine synthase A</fullName>
        <ecNumber evidence="1">5.4.99.12</ecNumber>
    </recommendedName>
    <alternativeName>
        <fullName evidence="1">tRNA pseudouridine(38-40) synthase</fullName>
    </alternativeName>
    <alternativeName>
        <fullName evidence="1">tRNA pseudouridylate synthase I</fullName>
    </alternativeName>
    <alternativeName>
        <fullName evidence="1">tRNA-uridine isomerase I</fullName>
    </alternativeName>
</protein>
<feature type="chain" id="PRO_0000057480" description="tRNA pseudouridine synthase A">
    <location>
        <begin position="1"/>
        <end position="267"/>
    </location>
</feature>
<feature type="active site" description="Nucleophile" evidence="1">
    <location>
        <position position="54"/>
    </location>
</feature>
<feature type="binding site" evidence="1">
    <location>
        <position position="114"/>
    </location>
    <ligand>
        <name>substrate</name>
    </ligand>
</feature>